<keyword id="KW-0027">Amidation</keyword>
<keyword id="KW-0903">Direct protein sequencing</keyword>
<keyword id="KW-0527">Neuropeptide</keyword>
<keyword id="KW-0964">Secreted</keyword>
<protein>
    <recommendedName>
        <fullName>Lymna-DF-amide 5</fullName>
    </recommendedName>
</protein>
<dbReference type="PIR" id="S32475">
    <property type="entry name" value="S32475"/>
</dbReference>
<dbReference type="GO" id="GO:0005576">
    <property type="term" value="C:extracellular region"/>
    <property type="evidence" value="ECO:0007669"/>
    <property type="project" value="UniProtKB-SubCell"/>
</dbReference>
<dbReference type="GO" id="GO:0007218">
    <property type="term" value="P:neuropeptide signaling pathway"/>
    <property type="evidence" value="ECO:0007669"/>
    <property type="project" value="UniProtKB-KW"/>
</dbReference>
<name>DFAM5_LYMST</name>
<proteinExistence type="evidence at protein level"/>
<feature type="peptide" id="PRO_0000043906" description="Lymna-DF-amide 5">
    <location>
        <begin position="1"/>
        <end position="13"/>
    </location>
</feature>
<feature type="modified residue" description="Phenylalanine amide" evidence="1">
    <location>
        <position position="13"/>
    </location>
</feature>
<sequence length="13" mass="1476">PFDRISSSAFSDF</sequence>
<organism>
    <name type="scientific">Lymnaea stagnalis</name>
    <name type="common">Great pond snail</name>
    <name type="synonym">Helix stagnalis</name>
    <dbReference type="NCBI Taxonomy" id="6523"/>
    <lineage>
        <taxon>Eukaryota</taxon>
        <taxon>Metazoa</taxon>
        <taxon>Spiralia</taxon>
        <taxon>Lophotrochozoa</taxon>
        <taxon>Mollusca</taxon>
        <taxon>Gastropoda</taxon>
        <taxon>Heterobranchia</taxon>
        <taxon>Euthyneura</taxon>
        <taxon>Panpulmonata</taxon>
        <taxon>Hygrophila</taxon>
        <taxon>Lymnaeoidea</taxon>
        <taxon>Lymnaeidae</taxon>
        <taxon>Lymnaea</taxon>
    </lineage>
</organism>
<accession>P80182</accession>
<reference key="1">
    <citation type="journal article" date="1993" name="Eur. J. Biochem.">
        <title>LymnaDFamides, a new family of neuropeptides from the pond snail, Lymnaea stagnalis. Clue to cholecystokinin immunoreactivity in invertebrates?</title>
        <authorList>
            <person name="Johnsen A.H."/>
            <person name="Rehfeld J.F."/>
        </authorList>
    </citation>
    <scope>PROTEIN SEQUENCE</scope>
    <scope>AMIDATION AT PHE-13</scope>
    <source>
        <tissue>Ganglion</tissue>
    </source>
</reference>
<comment type="subcellular location">
    <subcellularLocation>
        <location>Secreted</location>
    </subcellularLocation>
</comment>
<evidence type="ECO:0000269" key="1">
    <source>
    </source>
</evidence>